<feature type="chain" id="PRO_0000366263" description="Ribosomal RNA large subunit methyltransferase I">
    <location>
        <begin position="1"/>
        <end position="396"/>
    </location>
</feature>
<feature type="domain" description="PUA" evidence="1">
    <location>
        <begin position="2"/>
        <end position="79"/>
    </location>
</feature>
<sequence>MAVRIKLKPGREKSLERRHPWVFSNGIHNVKGKLEAGDTVDVVAHDGHWLGRGAWSPESQIQVRIWTFDREEEIDREFFKRRILRAQAGRDDLIREQGLTGYRLIAAESDGLPGITIDKYANVLVCQLLSMGADVWRDTIVDVLAELYPDCAIYERSDVDSRKKEGLASTMGLLHGTLPEMPVIIEENGIKIAVDVTKGHKTGFYLDQRDNRAMAARFVKGKSVLNCFCYTGTFGLYAAKAGAASIENVDVSALALDTARLNMRVNGLNDDNVHYNEADVFKLLRQYRDEGKTFDVIVLDPPKFADNKSQLNGACRGYKDINMIALQLLNPGGVLLTFSCSGLMPADLFQKIVADAALDAKREIQFIERLSQASDHPIGSAFPEGFYLKGLVARVW</sequence>
<accession>Q0HLL4</accession>
<keyword id="KW-0963">Cytoplasm</keyword>
<keyword id="KW-0489">Methyltransferase</keyword>
<keyword id="KW-0694">RNA-binding</keyword>
<keyword id="KW-0698">rRNA processing</keyword>
<keyword id="KW-0949">S-adenosyl-L-methionine</keyword>
<keyword id="KW-0808">Transferase</keyword>
<evidence type="ECO:0000255" key="1">
    <source>
        <dbReference type="HAMAP-Rule" id="MF_01857"/>
    </source>
</evidence>
<proteinExistence type="inferred from homology"/>
<name>RLMI_SHESM</name>
<reference key="1">
    <citation type="submission" date="2006-08" db="EMBL/GenBank/DDBJ databases">
        <title>Complete sequence of Shewanella sp. MR-4.</title>
        <authorList>
            <consortium name="US DOE Joint Genome Institute"/>
            <person name="Copeland A."/>
            <person name="Lucas S."/>
            <person name="Lapidus A."/>
            <person name="Barry K."/>
            <person name="Detter J.C."/>
            <person name="Glavina del Rio T."/>
            <person name="Hammon N."/>
            <person name="Israni S."/>
            <person name="Dalin E."/>
            <person name="Tice H."/>
            <person name="Pitluck S."/>
            <person name="Kiss H."/>
            <person name="Brettin T."/>
            <person name="Bruce D."/>
            <person name="Han C."/>
            <person name="Tapia R."/>
            <person name="Gilna P."/>
            <person name="Schmutz J."/>
            <person name="Larimer F."/>
            <person name="Land M."/>
            <person name="Hauser L."/>
            <person name="Kyrpides N."/>
            <person name="Mikhailova N."/>
            <person name="Nealson K."/>
            <person name="Konstantinidis K."/>
            <person name="Klappenbach J."/>
            <person name="Tiedje J."/>
            <person name="Richardson P."/>
        </authorList>
    </citation>
    <scope>NUCLEOTIDE SEQUENCE [LARGE SCALE GENOMIC DNA]</scope>
    <source>
        <strain>MR-4</strain>
    </source>
</reference>
<organism>
    <name type="scientific">Shewanella sp. (strain MR-4)</name>
    <dbReference type="NCBI Taxonomy" id="60480"/>
    <lineage>
        <taxon>Bacteria</taxon>
        <taxon>Pseudomonadati</taxon>
        <taxon>Pseudomonadota</taxon>
        <taxon>Gammaproteobacteria</taxon>
        <taxon>Alteromonadales</taxon>
        <taxon>Shewanellaceae</taxon>
        <taxon>Shewanella</taxon>
    </lineage>
</organism>
<protein>
    <recommendedName>
        <fullName evidence="1">Ribosomal RNA large subunit methyltransferase I</fullName>
        <ecNumber evidence="1">2.1.1.191</ecNumber>
    </recommendedName>
    <alternativeName>
        <fullName evidence="1">23S rRNA m5C1962 methyltransferase</fullName>
    </alternativeName>
    <alternativeName>
        <fullName evidence="1">rRNA (cytosine-C(5)-)-methyltransferase RlmI</fullName>
    </alternativeName>
</protein>
<gene>
    <name evidence="1" type="primary">rlmI</name>
    <name type="ordered locus">Shewmr4_0973</name>
</gene>
<comment type="function">
    <text evidence="1">Specifically methylates the cytosine at position 1962 (m5C1962) of 23S rRNA.</text>
</comment>
<comment type="catalytic activity">
    <reaction evidence="1">
        <text>cytidine(1962) in 23S rRNA + S-adenosyl-L-methionine = 5-methylcytidine(1962) in 23S rRNA + S-adenosyl-L-homocysteine + H(+)</text>
        <dbReference type="Rhea" id="RHEA:42912"/>
        <dbReference type="Rhea" id="RHEA-COMP:10382"/>
        <dbReference type="Rhea" id="RHEA-COMP:10386"/>
        <dbReference type="ChEBI" id="CHEBI:15378"/>
        <dbReference type="ChEBI" id="CHEBI:57856"/>
        <dbReference type="ChEBI" id="CHEBI:59789"/>
        <dbReference type="ChEBI" id="CHEBI:74483"/>
        <dbReference type="ChEBI" id="CHEBI:82748"/>
        <dbReference type="EC" id="2.1.1.191"/>
    </reaction>
</comment>
<comment type="subcellular location">
    <subcellularLocation>
        <location evidence="1">Cytoplasm</location>
    </subcellularLocation>
</comment>
<comment type="similarity">
    <text evidence="1">Belongs to the methyltransferase superfamily. RlmI family.</text>
</comment>
<dbReference type="EC" id="2.1.1.191" evidence="1"/>
<dbReference type="EMBL" id="CP000446">
    <property type="protein sequence ID" value="ABI38053.1"/>
    <property type="molecule type" value="Genomic_DNA"/>
</dbReference>
<dbReference type="RefSeq" id="WP_011621765.1">
    <property type="nucleotide sequence ID" value="NC_008321.1"/>
</dbReference>
<dbReference type="SMR" id="Q0HLL4"/>
<dbReference type="KEGG" id="she:Shewmr4_0973"/>
<dbReference type="HOGENOM" id="CLU_014042_0_0_6"/>
<dbReference type="GO" id="GO:0005737">
    <property type="term" value="C:cytoplasm"/>
    <property type="evidence" value="ECO:0007669"/>
    <property type="project" value="UniProtKB-SubCell"/>
</dbReference>
<dbReference type="GO" id="GO:0003723">
    <property type="term" value="F:RNA binding"/>
    <property type="evidence" value="ECO:0007669"/>
    <property type="project" value="UniProtKB-KW"/>
</dbReference>
<dbReference type="GO" id="GO:0016434">
    <property type="term" value="F:rRNA (cytosine) methyltransferase activity"/>
    <property type="evidence" value="ECO:0007669"/>
    <property type="project" value="UniProtKB-UniRule"/>
</dbReference>
<dbReference type="CDD" id="cd02440">
    <property type="entry name" value="AdoMet_MTases"/>
    <property type="match status" value="1"/>
</dbReference>
<dbReference type="CDD" id="cd21153">
    <property type="entry name" value="PUA_RlmI"/>
    <property type="match status" value="1"/>
</dbReference>
<dbReference type="CDD" id="cd11572">
    <property type="entry name" value="RlmI_M_like"/>
    <property type="match status" value="1"/>
</dbReference>
<dbReference type="Gene3D" id="2.30.130.10">
    <property type="entry name" value="PUA domain"/>
    <property type="match status" value="1"/>
</dbReference>
<dbReference type="Gene3D" id="3.30.750.80">
    <property type="entry name" value="RNA methyltransferase domain (HRMD) like"/>
    <property type="match status" value="1"/>
</dbReference>
<dbReference type="Gene3D" id="3.40.50.150">
    <property type="entry name" value="Vaccinia Virus protein VP39"/>
    <property type="match status" value="1"/>
</dbReference>
<dbReference type="HAMAP" id="MF_01857">
    <property type="entry name" value="23SrRNA_methyltr_I"/>
    <property type="match status" value="1"/>
</dbReference>
<dbReference type="InterPro" id="IPR002478">
    <property type="entry name" value="PUA"/>
</dbReference>
<dbReference type="InterPro" id="IPR015947">
    <property type="entry name" value="PUA-like_sf"/>
</dbReference>
<dbReference type="InterPro" id="IPR036974">
    <property type="entry name" value="PUA_sf"/>
</dbReference>
<dbReference type="InterPro" id="IPR023542">
    <property type="entry name" value="RLMI"/>
</dbReference>
<dbReference type="InterPro" id="IPR041532">
    <property type="entry name" value="RlmI-like_PUA"/>
</dbReference>
<dbReference type="InterPro" id="IPR019614">
    <property type="entry name" value="SAM-dep_methyl-trfase"/>
</dbReference>
<dbReference type="InterPro" id="IPR029063">
    <property type="entry name" value="SAM-dependent_MTases_sf"/>
</dbReference>
<dbReference type="PANTHER" id="PTHR42873">
    <property type="entry name" value="RIBOSOMAL RNA LARGE SUBUNIT METHYLTRANSFERASE"/>
    <property type="match status" value="1"/>
</dbReference>
<dbReference type="PANTHER" id="PTHR42873:SF1">
    <property type="entry name" value="S-ADENOSYLMETHIONINE-DEPENDENT METHYLTRANSFERASE DOMAIN-CONTAINING PROTEIN"/>
    <property type="match status" value="1"/>
</dbReference>
<dbReference type="Pfam" id="PF10672">
    <property type="entry name" value="Methyltrans_SAM"/>
    <property type="match status" value="1"/>
</dbReference>
<dbReference type="Pfam" id="PF17785">
    <property type="entry name" value="PUA_3"/>
    <property type="match status" value="1"/>
</dbReference>
<dbReference type="SMART" id="SM00359">
    <property type="entry name" value="PUA"/>
    <property type="match status" value="1"/>
</dbReference>
<dbReference type="SUPFAM" id="SSF88697">
    <property type="entry name" value="PUA domain-like"/>
    <property type="match status" value="1"/>
</dbReference>
<dbReference type="SUPFAM" id="SSF53335">
    <property type="entry name" value="S-adenosyl-L-methionine-dependent methyltransferases"/>
    <property type="match status" value="1"/>
</dbReference>
<dbReference type="PROSITE" id="PS50890">
    <property type="entry name" value="PUA"/>
    <property type="match status" value="1"/>
</dbReference>